<keyword id="KW-1185">Reference proteome</keyword>
<keyword id="KW-0687">Ribonucleoprotein</keyword>
<keyword id="KW-0689">Ribosomal protein</keyword>
<comment type="similarity">
    <text evidence="1">Belongs to the bacterial ribosomal protein bL27 family.</text>
</comment>
<gene>
    <name evidence="1" type="primary">rpmA</name>
    <name type="ordered locus">Aasi_0108</name>
</gene>
<name>RL27_AMOA5</name>
<feature type="chain" id="PRO_1000128687" description="Large ribosomal subunit protein bL27">
    <location>
        <begin position="1"/>
        <end position="87"/>
    </location>
</feature>
<feature type="region of interest" description="Disordered" evidence="2">
    <location>
        <begin position="1"/>
        <end position="21"/>
    </location>
</feature>
<accession>B3EUD7</accession>
<protein>
    <recommendedName>
        <fullName evidence="1">Large ribosomal subunit protein bL27</fullName>
    </recommendedName>
    <alternativeName>
        <fullName evidence="3">50S ribosomal protein L27</fullName>
    </alternativeName>
</protein>
<evidence type="ECO:0000255" key="1">
    <source>
        <dbReference type="HAMAP-Rule" id="MF_00539"/>
    </source>
</evidence>
<evidence type="ECO:0000256" key="2">
    <source>
        <dbReference type="SAM" id="MobiDB-lite"/>
    </source>
</evidence>
<evidence type="ECO:0000305" key="3"/>
<reference key="1">
    <citation type="journal article" date="2010" name="J. Bacteriol.">
        <title>The genome of the amoeba symbiont 'Candidatus Amoebophilus asiaticus' reveals common mechanisms for host cell interaction among amoeba-associated bacteria.</title>
        <authorList>
            <person name="Schmitz-Esser S."/>
            <person name="Tischler P."/>
            <person name="Arnold R."/>
            <person name="Montanaro J."/>
            <person name="Wagner M."/>
            <person name="Rattei T."/>
            <person name="Horn M."/>
        </authorList>
    </citation>
    <scope>NUCLEOTIDE SEQUENCE [LARGE SCALE GENOMIC DNA]</scope>
    <source>
        <strain>5a2</strain>
    </source>
</reference>
<organism>
    <name type="scientific">Amoebophilus asiaticus (strain 5a2)</name>
    <dbReference type="NCBI Taxonomy" id="452471"/>
    <lineage>
        <taxon>Bacteria</taxon>
        <taxon>Pseudomonadati</taxon>
        <taxon>Bacteroidota</taxon>
        <taxon>Cytophagia</taxon>
        <taxon>Cytophagales</taxon>
        <taxon>Amoebophilaceae</taxon>
        <taxon>Candidatus Amoebophilus</taxon>
    </lineage>
</organism>
<dbReference type="EMBL" id="CP001102">
    <property type="protein sequence ID" value="ACE05556.1"/>
    <property type="molecule type" value="Genomic_DNA"/>
</dbReference>
<dbReference type="RefSeq" id="WP_012472326.1">
    <property type="nucleotide sequence ID" value="NC_010830.1"/>
</dbReference>
<dbReference type="SMR" id="B3EUD7"/>
<dbReference type="STRING" id="452471.Aasi_0108"/>
<dbReference type="KEGG" id="aas:Aasi_0108"/>
<dbReference type="eggNOG" id="COG0211">
    <property type="taxonomic scope" value="Bacteria"/>
</dbReference>
<dbReference type="HOGENOM" id="CLU_095424_4_1_10"/>
<dbReference type="OrthoDB" id="9803474at2"/>
<dbReference type="Proteomes" id="UP000001227">
    <property type="component" value="Chromosome"/>
</dbReference>
<dbReference type="GO" id="GO:0022625">
    <property type="term" value="C:cytosolic large ribosomal subunit"/>
    <property type="evidence" value="ECO:0007669"/>
    <property type="project" value="TreeGrafter"/>
</dbReference>
<dbReference type="GO" id="GO:0003735">
    <property type="term" value="F:structural constituent of ribosome"/>
    <property type="evidence" value="ECO:0007669"/>
    <property type="project" value="InterPro"/>
</dbReference>
<dbReference type="GO" id="GO:0006412">
    <property type="term" value="P:translation"/>
    <property type="evidence" value="ECO:0007669"/>
    <property type="project" value="UniProtKB-UniRule"/>
</dbReference>
<dbReference type="FunFam" id="2.40.50.100:FF:000020">
    <property type="entry name" value="50S ribosomal protein L27"/>
    <property type="match status" value="1"/>
</dbReference>
<dbReference type="Gene3D" id="2.40.50.100">
    <property type="match status" value="1"/>
</dbReference>
<dbReference type="HAMAP" id="MF_00539">
    <property type="entry name" value="Ribosomal_bL27"/>
    <property type="match status" value="1"/>
</dbReference>
<dbReference type="InterPro" id="IPR001684">
    <property type="entry name" value="Ribosomal_bL27"/>
</dbReference>
<dbReference type="InterPro" id="IPR018261">
    <property type="entry name" value="Ribosomal_bL27_CS"/>
</dbReference>
<dbReference type="NCBIfam" id="TIGR00062">
    <property type="entry name" value="L27"/>
    <property type="match status" value="1"/>
</dbReference>
<dbReference type="PANTHER" id="PTHR15893:SF0">
    <property type="entry name" value="LARGE RIBOSOMAL SUBUNIT PROTEIN BL27M"/>
    <property type="match status" value="1"/>
</dbReference>
<dbReference type="PANTHER" id="PTHR15893">
    <property type="entry name" value="RIBOSOMAL PROTEIN L27"/>
    <property type="match status" value="1"/>
</dbReference>
<dbReference type="Pfam" id="PF01016">
    <property type="entry name" value="Ribosomal_L27"/>
    <property type="match status" value="1"/>
</dbReference>
<dbReference type="PRINTS" id="PR00063">
    <property type="entry name" value="RIBOSOMALL27"/>
</dbReference>
<dbReference type="SUPFAM" id="SSF110324">
    <property type="entry name" value="Ribosomal L27 protein-like"/>
    <property type="match status" value="1"/>
</dbReference>
<dbReference type="PROSITE" id="PS00831">
    <property type="entry name" value="RIBOSOMAL_L27"/>
    <property type="match status" value="1"/>
</dbReference>
<sequence>MAHKKGGGSTRNGRDSASKRLGIKKFGGEHVLAGNILVRQRGTQHNPGKNVGLGKDHTLYALLEGTVLFKKGTKGKSYVSVEPAKDN</sequence>
<proteinExistence type="inferred from homology"/>